<comment type="function">
    <text evidence="1">Cysteine desulfurases mobilize the sulfur from L-cysteine to yield L-alanine, an essential step in sulfur metabolism for biosynthesis of a variety of sulfur-containing biomolecules. Component of the suf operon, which is activated and required under specific conditions such as oxidative stress and iron limitation. Acts as a potent selenocysteine lyase in vitro, that mobilizes selenium from L-selenocysteine. Selenocysteine lyase activity is however unsure in vivo.</text>
</comment>
<comment type="catalytic activity">
    <reaction evidence="1">
        <text>(sulfur carrier)-H + L-cysteine = (sulfur carrier)-SH + L-alanine</text>
        <dbReference type="Rhea" id="RHEA:43892"/>
        <dbReference type="Rhea" id="RHEA-COMP:14737"/>
        <dbReference type="Rhea" id="RHEA-COMP:14739"/>
        <dbReference type="ChEBI" id="CHEBI:29917"/>
        <dbReference type="ChEBI" id="CHEBI:35235"/>
        <dbReference type="ChEBI" id="CHEBI:57972"/>
        <dbReference type="ChEBI" id="CHEBI:64428"/>
        <dbReference type="EC" id="2.8.1.7"/>
    </reaction>
</comment>
<comment type="catalytic activity">
    <reaction evidence="1">
        <text>L-selenocysteine + AH2 = hydrogenselenide + L-alanine + A + H(+)</text>
        <dbReference type="Rhea" id="RHEA:11632"/>
        <dbReference type="ChEBI" id="CHEBI:13193"/>
        <dbReference type="ChEBI" id="CHEBI:15378"/>
        <dbReference type="ChEBI" id="CHEBI:17499"/>
        <dbReference type="ChEBI" id="CHEBI:29317"/>
        <dbReference type="ChEBI" id="CHEBI:57843"/>
        <dbReference type="ChEBI" id="CHEBI:57972"/>
        <dbReference type="EC" id="4.4.1.16"/>
    </reaction>
</comment>
<comment type="cofactor">
    <cofactor evidence="1">
        <name>pyridoxal 5'-phosphate</name>
        <dbReference type="ChEBI" id="CHEBI:597326"/>
    </cofactor>
</comment>
<comment type="pathway">
    <text evidence="1">Cofactor biosynthesis; iron-sulfur cluster biosynthesis.</text>
</comment>
<comment type="subunit">
    <text evidence="1">Homodimer. Interacts with SufE and the SufBCD complex composed of SufB, SufC and SufD. The interaction with SufE is required to mediate the direct transfer of the sulfur atom from the S-sulfanylcysteine.</text>
</comment>
<comment type="subcellular location">
    <subcellularLocation>
        <location evidence="1">Cytoplasm</location>
    </subcellularLocation>
</comment>
<comment type="similarity">
    <text evidence="1">Belongs to the class-V pyridoxal-phosphate-dependent aminotransferase family. Csd subfamily.</text>
</comment>
<name>SUFS_SALNS</name>
<evidence type="ECO:0000255" key="1">
    <source>
        <dbReference type="HAMAP-Rule" id="MF_01831"/>
    </source>
</evidence>
<dbReference type="EC" id="2.8.1.7" evidence="1"/>
<dbReference type="EC" id="4.4.1.16" evidence="1"/>
<dbReference type="EMBL" id="CP001113">
    <property type="protein sequence ID" value="ACF61345.1"/>
    <property type="molecule type" value="Genomic_DNA"/>
</dbReference>
<dbReference type="RefSeq" id="WP_000143859.1">
    <property type="nucleotide sequence ID" value="NZ_CCMR01000003.1"/>
</dbReference>
<dbReference type="SMR" id="B4T4R6"/>
<dbReference type="KEGG" id="see:SNSL254_A1486"/>
<dbReference type="HOGENOM" id="CLU_003433_2_5_6"/>
<dbReference type="UniPathway" id="UPA00266"/>
<dbReference type="Proteomes" id="UP000008824">
    <property type="component" value="Chromosome"/>
</dbReference>
<dbReference type="GO" id="GO:0005737">
    <property type="term" value="C:cytoplasm"/>
    <property type="evidence" value="ECO:0007669"/>
    <property type="project" value="UniProtKB-SubCell"/>
</dbReference>
<dbReference type="GO" id="GO:0031071">
    <property type="term" value="F:cysteine desulfurase activity"/>
    <property type="evidence" value="ECO:0007669"/>
    <property type="project" value="UniProtKB-UniRule"/>
</dbReference>
<dbReference type="GO" id="GO:0030170">
    <property type="term" value="F:pyridoxal phosphate binding"/>
    <property type="evidence" value="ECO:0007669"/>
    <property type="project" value="InterPro"/>
</dbReference>
<dbReference type="GO" id="GO:0009000">
    <property type="term" value="F:selenocysteine lyase activity"/>
    <property type="evidence" value="ECO:0007669"/>
    <property type="project" value="UniProtKB-UniRule"/>
</dbReference>
<dbReference type="GO" id="GO:0006534">
    <property type="term" value="P:cysteine metabolic process"/>
    <property type="evidence" value="ECO:0007669"/>
    <property type="project" value="InterPro"/>
</dbReference>
<dbReference type="CDD" id="cd06453">
    <property type="entry name" value="SufS_like"/>
    <property type="match status" value="1"/>
</dbReference>
<dbReference type="FunFam" id="3.40.640.10:FF:000042">
    <property type="entry name" value="Cysteine desulfurase"/>
    <property type="match status" value="1"/>
</dbReference>
<dbReference type="Gene3D" id="3.90.1150.10">
    <property type="entry name" value="Aspartate Aminotransferase, domain 1"/>
    <property type="match status" value="1"/>
</dbReference>
<dbReference type="Gene3D" id="3.40.640.10">
    <property type="entry name" value="Type I PLP-dependent aspartate aminotransferase-like (Major domain)"/>
    <property type="match status" value="1"/>
</dbReference>
<dbReference type="HAMAP" id="MF_01831">
    <property type="entry name" value="SufS_aminotrans_5"/>
    <property type="match status" value="1"/>
</dbReference>
<dbReference type="InterPro" id="IPR000192">
    <property type="entry name" value="Aminotrans_V_dom"/>
</dbReference>
<dbReference type="InterPro" id="IPR020578">
    <property type="entry name" value="Aminotrans_V_PyrdxlP_BS"/>
</dbReference>
<dbReference type="InterPro" id="IPR010970">
    <property type="entry name" value="Cys_dSase_SufS"/>
</dbReference>
<dbReference type="InterPro" id="IPR015424">
    <property type="entry name" value="PyrdxlP-dep_Trfase"/>
</dbReference>
<dbReference type="InterPro" id="IPR015421">
    <property type="entry name" value="PyrdxlP-dep_Trfase_major"/>
</dbReference>
<dbReference type="InterPro" id="IPR015422">
    <property type="entry name" value="PyrdxlP-dep_Trfase_small"/>
</dbReference>
<dbReference type="NCBIfam" id="NF006791">
    <property type="entry name" value="PRK09295.1"/>
    <property type="match status" value="1"/>
</dbReference>
<dbReference type="NCBIfam" id="TIGR01979">
    <property type="entry name" value="sufS"/>
    <property type="match status" value="1"/>
</dbReference>
<dbReference type="PANTHER" id="PTHR43586">
    <property type="entry name" value="CYSTEINE DESULFURASE"/>
    <property type="match status" value="1"/>
</dbReference>
<dbReference type="PANTHER" id="PTHR43586:SF25">
    <property type="entry name" value="CYSTEINE DESULFURASE"/>
    <property type="match status" value="1"/>
</dbReference>
<dbReference type="Pfam" id="PF00266">
    <property type="entry name" value="Aminotran_5"/>
    <property type="match status" value="1"/>
</dbReference>
<dbReference type="SUPFAM" id="SSF53383">
    <property type="entry name" value="PLP-dependent transferases"/>
    <property type="match status" value="1"/>
</dbReference>
<dbReference type="PROSITE" id="PS00595">
    <property type="entry name" value="AA_TRANSFER_CLASS_5"/>
    <property type="match status" value="1"/>
</dbReference>
<keyword id="KW-0963">Cytoplasm</keyword>
<keyword id="KW-0456">Lyase</keyword>
<keyword id="KW-0663">Pyridoxal phosphate</keyword>
<keyword id="KW-0808">Transferase</keyword>
<protein>
    <recommendedName>
        <fullName evidence="1">Cysteine desulfurase</fullName>
        <ecNumber evidence="1">2.8.1.7</ecNumber>
    </recommendedName>
    <alternativeName>
        <fullName evidence="1">Selenocysteine beta-lyase</fullName>
        <shortName evidence="1">SCL</shortName>
    </alternativeName>
    <alternativeName>
        <fullName evidence="1">Selenocysteine lyase</fullName>
        <ecNumber evidence="1">4.4.1.16</ecNumber>
    </alternativeName>
    <alternativeName>
        <fullName evidence="1">Selenocysteine reductase</fullName>
    </alternativeName>
</protein>
<reference key="1">
    <citation type="journal article" date="2011" name="J. Bacteriol.">
        <title>Comparative genomics of 28 Salmonella enterica isolates: evidence for CRISPR-mediated adaptive sublineage evolution.</title>
        <authorList>
            <person name="Fricke W.F."/>
            <person name="Mammel M.K."/>
            <person name="McDermott P.F."/>
            <person name="Tartera C."/>
            <person name="White D.G."/>
            <person name="Leclerc J.E."/>
            <person name="Ravel J."/>
            <person name="Cebula T.A."/>
        </authorList>
    </citation>
    <scope>NUCLEOTIDE SEQUENCE [LARGE SCALE GENOMIC DNA]</scope>
    <source>
        <strain>SL254</strain>
    </source>
</reference>
<organism>
    <name type="scientific">Salmonella newport (strain SL254)</name>
    <dbReference type="NCBI Taxonomy" id="423368"/>
    <lineage>
        <taxon>Bacteria</taxon>
        <taxon>Pseudomonadati</taxon>
        <taxon>Pseudomonadota</taxon>
        <taxon>Gammaproteobacteria</taxon>
        <taxon>Enterobacterales</taxon>
        <taxon>Enterobacteriaceae</taxon>
        <taxon>Salmonella</taxon>
    </lineage>
</organism>
<gene>
    <name evidence="1" type="primary">sufS</name>
    <name type="ordered locus">SNSL254_A1486</name>
</gene>
<accession>B4T4R6</accession>
<proteinExistence type="inferred from homology"/>
<feature type="chain" id="PRO_1000188309" description="Cysteine desulfurase">
    <location>
        <begin position="1"/>
        <end position="406"/>
    </location>
</feature>
<feature type="active site" description="Cysteine persulfide intermediate" evidence="1">
    <location>
        <position position="364"/>
    </location>
</feature>
<feature type="modified residue" description="N6-(pyridoxal phosphate)lysine" evidence="1">
    <location>
        <position position="226"/>
    </location>
</feature>
<sequence>MTFPVEKVRADFPILQREVNGLPLAYLDSAASAQKPNQVIDAESAFYRHGYAAVHRGIHTLSAQATESMENVRKQASRFINARSAEELVFVRGTTEGINLVANSWGTENIRAGDNIIISEMEHHANIVPWQMLCERKGAELRVIPLHPDGTLRLETLAALFDDRTRLLAITHVSNVLGTENPLPDMIALARQHGAKVLVDGAQAVMHHAVDVQALDCDFYVFSGHKLYGPTGIGILYVKEALLQEMPPWEGGGSMISTVSLTQGTTWAKAPWRFEAGTPNTGGIIGLGAAIDYVTSLGLDKIGDYEQMLMRYALEQLAQVPDITLYGPAQRLGVIAFNLGKHHAYDVGSFLDNYGIAVRTGHHCAMPLMAWYGVPAMCRASLAMYNTHEEVDRLVAGLTRIHRLLG</sequence>